<feature type="chain" id="PRO_0000410857" description="Octanoyltransferase LipM">
    <location>
        <begin position="1"/>
        <end position="276"/>
    </location>
</feature>
<feature type="domain" description="BPL/LPL catalytic" evidence="2">
    <location>
        <begin position="33"/>
        <end position="247"/>
    </location>
</feature>
<feature type="active site" description="Acyl-thioester intermediate" evidence="1">
    <location>
        <position position="150"/>
    </location>
</feature>
<feature type="site" description="Lowers pKa of active site Cys" evidence="1">
    <location>
        <position position="165"/>
    </location>
</feature>
<keyword id="KW-0012">Acyltransferase</keyword>
<keyword id="KW-0808">Transferase</keyword>
<organism>
    <name type="scientific">Exiguobacterium sp. (strain ATCC BAA-1283 / AT1b)</name>
    <dbReference type="NCBI Taxonomy" id="360911"/>
    <lineage>
        <taxon>Bacteria</taxon>
        <taxon>Bacillati</taxon>
        <taxon>Bacillota</taxon>
        <taxon>Bacilli</taxon>
        <taxon>Bacillales</taxon>
        <taxon>Bacillales Family XII. Incertae Sedis</taxon>
        <taxon>Exiguobacterium</taxon>
    </lineage>
</organism>
<comment type="function">
    <text evidence="1">Catalyzes the transfer of endogenously produced octanoic acid from octanoyl-acyl-carrier-protein onto the lipoyl domain of GcvH, an intermediate carrier during protein lipoylation.</text>
</comment>
<comment type="catalytic activity">
    <reaction evidence="1">
        <text>octanoyl-[ACP] + L-lysyl-[protein] = N(6)-octanoyl-L-lysyl-[protein] + holo-[ACP] + H(+)</text>
        <dbReference type="Rhea" id="RHEA:17665"/>
        <dbReference type="Rhea" id="RHEA-COMP:9636"/>
        <dbReference type="Rhea" id="RHEA-COMP:9685"/>
        <dbReference type="Rhea" id="RHEA-COMP:9752"/>
        <dbReference type="Rhea" id="RHEA-COMP:9928"/>
        <dbReference type="ChEBI" id="CHEBI:15378"/>
        <dbReference type="ChEBI" id="CHEBI:29969"/>
        <dbReference type="ChEBI" id="CHEBI:64479"/>
        <dbReference type="ChEBI" id="CHEBI:78463"/>
        <dbReference type="ChEBI" id="CHEBI:78809"/>
        <dbReference type="EC" id="2.3.1.181"/>
    </reaction>
</comment>
<comment type="pathway">
    <text evidence="1">Protein modification; protein lipoylation via endogenous pathway; protein N(6)-(lipoyl)lysine from octanoyl-[acyl-carrier-protein].</text>
</comment>
<comment type="subunit">
    <text evidence="1">Monomer.</text>
</comment>
<comment type="miscellaneous">
    <text evidence="1">In the reaction, the free carboxyl group of octanoic acid is attached via an amide linkage to the epsilon-amino group of a specific lysine residue of lipoyl domains of lipoate-dependent enzymes. The reaction proceeds via an octanoyl-thioester enzyme intermediate.</text>
</comment>
<comment type="similarity">
    <text evidence="1">Belongs to the octanoyltransferase LipM family.</text>
</comment>
<reference key="1">
    <citation type="journal article" date="2011" name="J. Bacteriol.">
        <title>Complete genome sequence of the Thermophilic Bacterium Exiguobacterium sp. AT1b.</title>
        <authorList>
            <person name="Vishnivetskaya T.A."/>
            <person name="Lucas S."/>
            <person name="Copeland A."/>
            <person name="Lapidus A."/>
            <person name="Glavina del Rio T."/>
            <person name="Dalin E."/>
            <person name="Tice H."/>
            <person name="Bruce D.C."/>
            <person name="Goodwin L.A."/>
            <person name="Pitluck S."/>
            <person name="Saunders E."/>
            <person name="Brettin T."/>
            <person name="Detter C."/>
            <person name="Han C."/>
            <person name="Larimer F."/>
            <person name="Land M.L."/>
            <person name="Hauser L.J."/>
            <person name="Kyrpides N.C."/>
            <person name="Ovchinnikova G."/>
            <person name="Kathariou S."/>
            <person name="Ramaley R.F."/>
            <person name="Rodrigues D.F."/>
            <person name="Hendrix C."/>
            <person name="Richardson P."/>
            <person name="Tiedje J.M."/>
        </authorList>
    </citation>
    <scope>NUCLEOTIDE SEQUENCE [LARGE SCALE GENOMIC DNA]</scope>
    <source>
        <strain>ATCC BAA-1283 / AT1b</strain>
    </source>
</reference>
<sequence>MTGTTWHLLRTESTSPAENMAIDEAIANWVAKGELKPTLRFYSWAPHAISVGRFQRATRDLDRDALEANNIPVVRRLTGGRAVLHADELTYSVILPESTPALPTNIIESYRLLTEGVRRGYRELGVPAEFSVPLTEEDREALRKPKSAVCFDAASYYELAVDGKKIAGSAQVRHQGAVLQHGSIPLSVDDEVLFDCFAMDETEKQEAKTRFSEKAVALNDTLKRFVSFDEVAAAFETGFKDAFSLTFEPLVFTKEQQAEIDLLVKKYESDEWVWKR</sequence>
<protein>
    <recommendedName>
        <fullName evidence="1">Octanoyltransferase LipM</fullName>
        <ecNumber evidence="1">2.3.1.181</ecNumber>
    </recommendedName>
    <alternativeName>
        <fullName evidence="1">Octanoyl-[acyl-carrier-protein]:[GcvH] N-octanoyltransferase</fullName>
    </alternativeName>
</protein>
<gene>
    <name evidence="1" type="primary">lipM</name>
    <name type="ordered locus">EAT1b_1404</name>
</gene>
<name>LIPM_EXISA</name>
<evidence type="ECO:0000255" key="1">
    <source>
        <dbReference type="HAMAP-Rule" id="MF_02118"/>
    </source>
</evidence>
<evidence type="ECO:0000255" key="2">
    <source>
        <dbReference type="PROSITE-ProRule" id="PRU01067"/>
    </source>
</evidence>
<proteinExistence type="inferred from homology"/>
<dbReference type="EC" id="2.3.1.181" evidence="1"/>
<dbReference type="EMBL" id="CP001615">
    <property type="protein sequence ID" value="ACQ70331.1"/>
    <property type="molecule type" value="Genomic_DNA"/>
</dbReference>
<dbReference type="RefSeq" id="WP_012727450.1">
    <property type="nucleotide sequence ID" value="NC_012673.1"/>
</dbReference>
<dbReference type="SMR" id="C4KZ18"/>
<dbReference type="STRING" id="360911.EAT1b_1404"/>
<dbReference type="KEGG" id="eat:EAT1b_1404"/>
<dbReference type="eggNOG" id="COG0095">
    <property type="taxonomic scope" value="Bacteria"/>
</dbReference>
<dbReference type="HOGENOM" id="CLU_022986_5_0_9"/>
<dbReference type="OrthoDB" id="9774653at2"/>
<dbReference type="Proteomes" id="UP000000716">
    <property type="component" value="Chromosome"/>
</dbReference>
<dbReference type="GO" id="GO:0033819">
    <property type="term" value="F:lipoyl(octanoyl) transferase activity"/>
    <property type="evidence" value="ECO:0007669"/>
    <property type="project" value="UniProtKB-UniRule"/>
</dbReference>
<dbReference type="GO" id="GO:0009107">
    <property type="term" value="P:lipoate biosynthetic process"/>
    <property type="evidence" value="ECO:0007669"/>
    <property type="project" value="UniProtKB-UniRule"/>
</dbReference>
<dbReference type="GO" id="GO:0036211">
    <property type="term" value="P:protein modification process"/>
    <property type="evidence" value="ECO:0007669"/>
    <property type="project" value="InterPro"/>
</dbReference>
<dbReference type="CDD" id="cd16443">
    <property type="entry name" value="LplA"/>
    <property type="match status" value="1"/>
</dbReference>
<dbReference type="Gene3D" id="3.30.930.10">
    <property type="entry name" value="Bira Bifunctional Protein, Domain 2"/>
    <property type="match status" value="1"/>
</dbReference>
<dbReference type="HAMAP" id="MF_02118">
    <property type="entry name" value="LipM"/>
    <property type="match status" value="1"/>
</dbReference>
<dbReference type="InterPro" id="IPR045864">
    <property type="entry name" value="aa-tRNA-synth_II/BPL/LPL"/>
</dbReference>
<dbReference type="InterPro" id="IPR004143">
    <property type="entry name" value="BPL_LPL_catalytic"/>
</dbReference>
<dbReference type="InterPro" id="IPR024898">
    <property type="entry name" value="LipM"/>
</dbReference>
<dbReference type="InterPro" id="IPR050664">
    <property type="entry name" value="Octanoyltrans_LipM/LipL"/>
</dbReference>
<dbReference type="PANTHER" id="PTHR43679:SF2">
    <property type="entry name" value="OCTANOYL-[GCVH]:PROTEIN N-OCTANOYLTRANSFERASE"/>
    <property type="match status" value="1"/>
</dbReference>
<dbReference type="PANTHER" id="PTHR43679">
    <property type="entry name" value="OCTANOYLTRANSFERASE LIPM-RELATED"/>
    <property type="match status" value="1"/>
</dbReference>
<dbReference type="Pfam" id="PF21948">
    <property type="entry name" value="LplA-B_cat"/>
    <property type="match status" value="1"/>
</dbReference>
<dbReference type="SUPFAM" id="SSF55681">
    <property type="entry name" value="Class II aaRS and biotin synthetases"/>
    <property type="match status" value="1"/>
</dbReference>
<dbReference type="PROSITE" id="PS51733">
    <property type="entry name" value="BPL_LPL_CATALYTIC"/>
    <property type="match status" value="1"/>
</dbReference>
<accession>C4KZ18</accession>